<keyword id="KW-0066">ATP synthesis</keyword>
<keyword id="KW-1003">Cell membrane</keyword>
<keyword id="KW-0139">CF(1)</keyword>
<keyword id="KW-0375">Hydrogen ion transport</keyword>
<keyword id="KW-0406">Ion transport</keyword>
<keyword id="KW-0472">Membrane</keyword>
<keyword id="KW-0813">Transport</keyword>
<comment type="function">
    <text evidence="1">F(1)F(0) ATP synthase produces ATP from ADP in the presence of a proton or sodium gradient. F-type ATPases consist of two structural domains, F(1) containing the extramembraneous catalytic core and F(0) containing the membrane proton channel, linked together by a central stalk and a peripheral stalk. During catalysis, ATP synthesis in the catalytic domain of F(1) is coupled via a rotary mechanism of the central stalk subunits to proton translocation.</text>
</comment>
<comment type="function">
    <text evidence="1">This protein is part of the stalk that links CF(0) to CF(1). It either transmits conformational changes from CF(0) to CF(1) or is implicated in proton conduction.</text>
</comment>
<comment type="subunit">
    <text evidence="1">F-type ATPases have 2 components, F(1) - the catalytic core - and F(0) - the membrane proton channel. F(1) has five subunits: alpha(3), beta(3), gamma(1), delta(1), epsilon(1). F(0) has three main subunits: a(1), b(2) and c(10-14). The alpha and beta chains form an alternating ring which encloses part of the gamma chain. F(1) is attached to F(0) by a central stalk formed by the gamma and epsilon chains, while a peripheral stalk is formed by the delta and b chains.</text>
</comment>
<comment type="subcellular location">
    <subcellularLocation>
        <location evidence="1">Cell membrane</location>
        <topology evidence="1">Peripheral membrane protein</topology>
    </subcellularLocation>
</comment>
<comment type="similarity">
    <text evidence="1">Belongs to the ATPase delta chain family.</text>
</comment>
<feature type="chain" id="PRO_0000371047" description="ATP synthase subunit delta">
    <location>
        <begin position="1"/>
        <end position="180"/>
    </location>
</feature>
<sequence>MSLDKTTIAKRYSKALFEIVSEKGQRDETRAELNQIQQVFNDNEGLGKILTDKGLEQNQKLEILNILTKDASNYVGNLIKMTFDYGRMDYLTAIIDEFNNLCDADEKIVRAKVVSAIPLSDQQLDKMAEQFAKRLKVSEVVLDSEVDDSIIGGAIIKTDSLIYDGSIQTQINQIRQRLIG</sequence>
<dbReference type="EMBL" id="CP000422">
    <property type="protein sequence ID" value="ABJ68361.1"/>
    <property type="molecule type" value="Genomic_DNA"/>
</dbReference>
<dbReference type="RefSeq" id="WP_011673611.1">
    <property type="nucleotide sequence ID" value="NC_008525.1"/>
</dbReference>
<dbReference type="SMR" id="Q03EL1"/>
<dbReference type="STRING" id="278197.PEPE_1320"/>
<dbReference type="GeneID" id="33061459"/>
<dbReference type="KEGG" id="ppe:PEPE_1320"/>
<dbReference type="eggNOG" id="COG0712">
    <property type="taxonomic scope" value="Bacteria"/>
</dbReference>
<dbReference type="HOGENOM" id="CLU_085114_4_1_9"/>
<dbReference type="OrthoDB" id="9786633at2"/>
<dbReference type="Proteomes" id="UP000000773">
    <property type="component" value="Chromosome"/>
</dbReference>
<dbReference type="GO" id="GO:0005886">
    <property type="term" value="C:plasma membrane"/>
    <property type="evidence" value="ECO:0007669"/>
    <property type="project" value="UniProtKB-SubCell"/>
</dbReference>
<dbReference type="GO" id="GO:0045259">
    <property type="term" value="C:proton-transporting ATP synthase complex"/>
    <property type="evidence" value="ECO:0007669"/>
    <property type="project" value="UniProtKB-KW"/>
</dbReference>
<dbReference type="GO" id="GO:0046933">
    <property type="term" value="F:proton-transporting ATP synthase activity, rotational mechanism"/>
    <property type="evidence" value="ECO:0007669"/>
    <property type="project" value="UniProtKB-UniRule"/>
</dbReference>
<dbReference type="Gene3D" id="1.10.520.20">
    <property type="entry name" value="N-terminal domain of the delta subunit of the F1F0-ATP synthase"/>
    <property type="match status" value="1"/>
</dbReference>
<dbReference type="HAMAP" id="MF_01416">
    <property type="entry name" value="ATP_synth_delta_bact"/>
    <property type="match status" value="1"/>
</dbReference>
<dbReference type="InterPro" id="IPR026015">
    <property type="entry name" value="ATP_synth_OSCP/delta_N_sf"/>
</dbReference>
<dbReference type="InterPro" id="IPR000711">
    <property type="entry name" value="ATPase_OSCP/dsu"/>
</dbReference>
<dbReference type="NCBIfam" id="TIGR01145">
    <property type="entry name" value="ATP_synt_delta"/>
    <property type="match status" value="1"/>
</dbReference>
<dbReference type="PANTHER" id="PTHR11910">
    <property type="entry name" value="ATP SYNTHASE DELTA CHAIN"/>
    <property type="match status" value="1"/>
</dbReference>
<dbReference type="Pfam" id="PF00213">
    <property type="entry name" value="OSCP"/>
    <property type="match status" value="1"/>
</dbReference>
<dbReference type="PRINTS" id="PR00125">
    <property type="entry name" value="ATPASEDELTA"/>
</dbReference>
<dbReference type="SUPFAM" id="SSF47928">
    <property type="entry name" value="N-terminal domain of the delta subunit of the F1F0-ATP synthase"/>
    <property type="match status" value="1"/>
</dbReference>
<organism>
    <name type="scientific">Pediococcus pentosaceus (strain ATCC 25745 / CCUG 21536 / LMG 10740 / 183-1w)</name>
    <dbReference type="NCBI Taxonomy" id="278197"/>
    <lineage>
        <taxon>Bacteria</taxon>
        <taxon>Bacillati</taxon>
        <taxon>Bacillota</taxon>
        <taxon>Bacilli</taxon>
        <taxon>Lactobacillales</taxon>
        <taxon>Lactobacillaceae</taxon>
        <taxon>Pediococcus</taxon>
    </lineage>
</organism>
<accession>Q03EL1</accession>
<name>ATPD_PEDPA</name>
<gene>
    <name evidence="1" type="primary">atpH</name>
    <name type="ordered locus">PEPE_1320</name>
</gene>
<reference key="1">
    <citation type="journal article" date="2006" name="Proc. Natl. Acad. Sci. U.S.A.">
        <title>Comparative genomics of the lactic acid bacteria.</title>
        <authorList>
            <person name="Makarova K.S."/>
            <person name="Slesarev A."/>
            <person name="Wolf Y.I."/>
            <person name="Sorokin A."/>
            <person name="Mirkin B."/>
            <person name="Koonin E.V."/>
            <person name="Pavlov A."/>
            <person name="Pavlova N."/>
            <person name="Karamychev V."/>
            <person name="Polouchine N."/>
            <person name="Shakhova V."/>
            <person name="Grigoriev I."/>
            <person name="Lou Y."/>
            <person name="Rohksar D."/>
            <person name="Lucas S."/>
            <person name="Huang K."/>
            <person name="Goodstein D.M."/>
            <person name="Hawkins T."/>
            <person name="Plengvidhya V."/>
            <person name="Welker D."/>
            <person name="Hughes J."/>
            <person name="Goh Y."/>
            <person name="Benson A."/>
            <person name="Baldwin K."/>
            <person name="Lee J.-H."/>
            <person name="Diaz-Muniz I."/>
            <person name="Dosti B."/>
            <person name="Smeianov V."/>
            <person name="Wechter W."/>
            <person name="Barabote R."/>
            <person name="Lorca G."/>
            <person name="Altermann E."/>
            <person name="Barrangou R."/>
            <person name="Ganesan B."/>
            <person name="Xie Y."/>
            <person name="Rawsthorne H."/>
            <person name="Tamir D."/>
            <person name="Parker C."/>
            <person name="Breidt F."/>
            <person name="Broadbent J.R."/>
            <person name="Hutkins R."/>
            <person name="O'Sullivan D."/>
            <person name="Steele J."/>
            <person name="Unlu G."/>
            <person name="Saier M.H. Jr."/>
            <person name="Klaenhammer T."/>
            <person name="Richardson P."/>
            <person name="Kozyavkin S."/>
            <person name="Weimer B.C."/>
            <person name="Mills D.A."/>
        </authorList>
    </citation>
    <scope>NUCLEOTIDE SEQUENCE [LARGE SCALE GENOMIC DNA]</scope>
    <source>
        <strain>ATCC 25745 / CCUG 21536 / LMG 10740 / 183-1w</strain>
    </source>
</reference>
<protein>
    <recommendedName>
        <fullName evidence="1">ATP synthase subunit delta</fullName>
    </recommendedName>
    <alternativeName>
        <fullName evidence="1">ATP synthase F(1) sector subunit delta</fullName>
    </alternativeName>
    <alternativeName>
        <fullName evidence="1">F-type ATPase subunit delta</fullName>
        <shortName evidence="1">F-ATPase subunit delta</shortName>
    </alternativeName>
</protein>
<proteinExistence type="inferred from homology"/>
<evidence type="ECO:0000255" key="1">
    <source>
        <dbReference type="HAMAP-Rule" id="MF_01416"/>
    </source>
</evidence>